<comment type="function">
    <text evidence="1">Required for conjugative transfer of plasmid R751. Binds tightly and specifically to the relaxase TraI. Can also bind to DNA without sequence specificity. May form a pore-like structure that could serve as a channel for DNA transfer (By similarity).</text>
</comment>
<comment type="subunit">
    <text evidence="1">May form multimers of at least 18 subunits.</text>
</comment>
<comment type="subcellular location">
    <subcellularLocation>
        <location evidence="1">Cell inner membrane</location>
        <topology evidence="1">Multi-pass membrane protein</topology>
    </subcellularLocation>
</comment>
<comment type="similarity">
    <text evidence="3">Belongs to the VirD4/TraG family.</text>
</comment>
<gene>
    <name type="primary">traG</name>
</gene>
<geneLocation type="plasmid">
    <name>IncP-beta R751</name>
</geneLocation>
<dbReference type="EMBL" id="X54458">
    <property type="protein sequence ID" value="CAA38327.1"/>
    <property type="molecule type" value="Genomic_DNA"/>
</dbReference>
<dbReference type="EMBL" id="U67194">
    <property type="protein sequence ID" value="AAC64474.1"/>
    <property type="molecule type" value="Genomic_DNA"/>
</dbReference>
<dbReference type="SMR" id="Q00184"/>
<dbReference type="GO" id="GO:0005886">
    <property type="term" value="C:plasma membrane"/>
    <property type="evidence" value="ECO:0007669"/>
    <property type="project" value="UniProtKB-SubCell"/>
</dbReference>
<dbReference type="GO" id="GO:0003677">
    <property type="term" value="F:DNA binding"/>
    <property type="evidence" value="ECO:0007669"/>
    <property type="project" value="UniProtKB-KW"/>
</dbReference>
<dbReference type="CDD" id="cd01127">
    <property type="entry name" value="TrwB_TraG_TraD_VirD4"/>
    <property type="match status" value="2"/>
</dbReference>
<dbReference type="Gene3D" id="3.40.50.300">
    <property type="entry name" value="P-loop containing nucleotide triphosphate hydrolases"/>
    <property type="match status" value="1"/>
</dbReference>
<dbReference type="InterPro" id="IPR027417">
    <property type="entry name" value="P-loop_NTPase"/>
</dbReference>
<dbReference type="InterPro" id="IPR051539">
    <property type="entry name" value="T4SS-coupling_protein"/>
</dbReference>
<dbReference type="InterPro" id="IPR003688">
    <property type="entry name" value="TraG/VirD4"/>
</dbReference>
<dbReference type="NCBIfam" id="NF010453">
    <property type="entry name" value="PRK13880.1"/>
    <property type="match status" value="1"/>
</dbReference>
<dbReference type="PANTHER" id="PTHR37937">
    <property type="entry name" value="CONJUGATIVE TRANSFER: DNA TRANSPORT"/>
    <property type="match status" value="1"/>
</dbReference>
<dbReference type="PANTHER" id="PTHR37937:SF1">
    <property type="entry name" value="CONJUGATIVE TRANSFER: DNA TRANSPORT"/>
    <property type="match status" value="1"/>
</dbReference>
<dbReference type="Pfam" id="PF02534">
    <property type="entry name" value="T4SS-DNA_transf"/>
    <property type="match status" value="1"/>
</dbReference>
<dbReference type="SUPFAM" id="SSF52540">
    <property type="entry name" value="P-loop containing nucleoside triphosphate hydrolases"/>
    <property type="match status" value="1"/>
</dbReference>
<proteinExistence type="inferred from homology"/>
<name>TRAG5_ECOLX</name>
<reference key="1">
    <citation type="journal article" date="1991" name="DNA Seq.">
        <title>Nucleotide sequence and organization of genes flanking the transfer origin of promiscuous plasmid RP4.</title>
        <authorList>
            <person name="Ziegelin G."/>
            <person name="Pansegrau W."/>
            <person name="Strack B."/>
            <person name="Balzer D."/>
            <person name="Kroeger M."/>
            <person name="Kruft V."/>
            <person name="Lanka E."/>
        </authorList>
    </citation>
    <scope>NUCLEOTIDE SEQUENCE [GENOMIC DNA]</scope>
    <source>
        <strain>ATCC 33694 / HB101</strain>
    </source>
</reference>
<reference key="2">
    <citation type="submission" date="1996-08" db="EMBL/GenBank/DDBJ databases">
        <authorList>
            <person name="Thomas C.M."/>
        </authorList>
    </citation>
    <scope>NUCLEOTIDE SEQUENCE [GENOMIC DNA]</scope>
</reference>
<sequence length="637" mass="69883">MKIKMNNAVGPQVRTAKPKPSKLLPVLGAASMVGGLQAATQFFAHTFAYHATLGPNVGHVYAPWSILHWTYKWYSQYPDEIMKAGSMGMLVSTVGLLGVAVAKVVTSNSSKANEYLHGSARWAEKKDIQAAGLLPRERNVLEIVTGKAAPTATGVYVGGWQDKDGNFFYLRHSGPEHVLTYAPTRSGKGVGLVVPTLLSWGASSVITDLKGELWALTAGWRQKHAKNKVLRFEPASTSGGVCWNPLDEIRLGTEYEVGDVQNLATLIVDPDGKGLDSHWQKTAFALLVGVILHALYKAKDDGGTATLPSVDAMLADPNRDIGELWMEMATYGHVDGQNHHAIGSAARDMMDRPEEEAGSVLSTAKSYLALYRDPVVARNVSRSDFRIKQLMHEDDPVSLYIVTQPNDKARLRPLVRVMVNMIVRLLADKMDFEGGRPVAHYKHRLLMMLDEFPSLGKLEIMQESLAFVAGYGIKCYLICQDINQLKSRETGYGHDESITSNCHVQNAYPPNRVETAEHLSRLTGQTTVVKEQITTSGRRTAAMLGQVSRTYQEVQRPLLTPDECLRMPGPKKNAQGEIEEAGDMVIYVAGYPAIYGKQPLYFKDPVFSARAAIPAPKVSDRLRAVAQADTEGEGITI</sequence>
<organism>
    <name type="scientific">Escherichia coli</name>
    <dbReference type="NCBI Taxonomy" id="562"/>
    <lineage>
        <taxon>Bacteria</taxon>
        <taxon>Pseudomonadati</taxon>
        <taxon>Pseudomonadota</taxon>
        <taxon>Gammaproteobacteria</taxon>
        <taxon>Enterobacterales</taxon>
        <taxon>Enterobacteriaceae</taxon>
        <taxon>Escherichia</taxon>
    </lineage>
</organism>
<keyword id="KW-0997">Cell inner membrane</keyword>
<keyword id="KW-1003">Cell membrane</keyword>
<keyword id="KW-0184">Conjugation</keyword>
<keyword id="KW-0238">DNA-binding</keyword>
<keyword id="KW-0472">Membrane</keyword>
<keyword id="KW-0614">Plasmid</keyword>
<keyword id="KW-0812">Transmembrane</keyword>
<keyword id="KW-1133">Transmembrane helix</keyword>
<protein>
    <recommendedName>
        <fullName>Conjugal transfer protein TraG</fullName>
    </recommendedName>
</protein>
<accession>Q00184</accession>
<evidence type="ECO:0000250" key="1"/>
<evidence type="ECO:0000255" key="2"/>
<evidence type="ECO:0000305" key="3"/>
<feature type="chain" id="PRO_0000221658" description="Conjugal transfer protein TraG">
    <location>
        <begin position="1"/>
        <end position="637"/>
    </location>
</feature>
<feature type="topological domain" description="Cytoplasmic" evidence="2">
    <location>
        <begin position="1"/>
        <end position="22"/>
    </location>
</feature>
<feature type="transmembrane region" description="Helical" evidence="2">
    <location>
        <begin position="23"/>
        <end position="43"/>
    </location>
</feature>
<feature type="topological domain" description="Periplasmic" evidence="2">
    <location>
        <begin position="44"/>
        <end position="84"/>
    </location>
</feature>
<feature type="transmembrane region" description="Helical" evidence="2">
    <location>
        <begin position="85"/>
        <end position="105"/>
    </location>
</feature>
<feature type="topological domain" description="Cytoplasmic" evidence="2">
    <location>
        <begin position="106"/>
        <end position="637"/>
    </location>
</feature>